<dbReference type="EC" id="2.7.1.50" evidence="1"/>
<dbReference type="EMBL" id="CP001144">
    <property type="protein sequence ID" value="ACH75157.1"/>
    <property type="molecule type" value="Genomic_DNA"/>
</dbReference>
<dbReference type="RefSeq" id="WP_001182156.1">
    <property type="nucleotide sequence ID" value="NC_011205.1"/>
</dbReference>
<dbReference type="SMR" id="B5FMW2"/>
<dbReference type="KEGG" id="sed:SeD_A2491"/>
<dbReference type="HOGENOM" id="CLU_019943_0_1_6"/>
<dbReference type="UniPathway" id="UPA00060">
    <property type="reaction ID" value="UER00139"/>
</dbReference>
<dbReference type="Proteomes" id="UP000008322">
    <property type="component" value="Chromosome"/>
</dbReference>
<dbReference type="GO" id="GO:0005524">
    <property type="term" value="F:ATP binding"/>
    <property type="evidence" value="ECO:0007669"/>
    <property type="project" value="UniProtKB-UniRule"/>
</dbReference>
<dbReference type="GO" id="GO:0004417">
    <property type="term" value="F:hydroxyethylthiazole kinase activity"/>
    <property type="evidence" value="ECO:0007669"/>
    <property type="project" value="UniProtKB-UniRule"/>
</dbReference>
<dbReference type="GO" id="GO:0000287">
    <property type="term" value="F:magnesium ion binding"/>
    <property type="evidence" value="ECO:0007669"/>
    <property type="project" value="UniProtKB-UniRule"/>
</dbReference>
<dbReference type="GO" id="GO:0009228">
    <property type="term" value="P:thiamine biosynthetic process"/>
    <property type="evidence" value="ECO:0007669"/>
    <property type="project" value="UniProtKB-KW"/>
</dbReference>
<dbReference type="GO" id="GO:0009229">
    <property type="term" value="P:thiamine diphosphate biosynthetic process"/>
    <property type="evidence" value="ECO:0007669"/>
    <property type="project" value="UniProtKB-UniRule"/>
</dbReference>
<dbReference type="CDD" id="cd01170">
    <property type="entry name" value="THZ_kinase"/>
    <property type="match status" value="1"/>
</dbReference>
<dbReference type="FunFam" id="3.40.1190.20:FF:000015">
    <property type="entry name" value="Hydroxyethylthiazole kinase"/>
    <property type="match status" value="1"/>
</dbReference>
<dbReference type="Gene3D" id="3.40.1190.20">
    <property type="match status" value="1"/>
</dbReference>
<dbReference type="HAMAP" id="MF_00228">
    <property type="entry name" value="Thz_kinase"/>
    <property type="match status" value="1"/>
</dbReference>
<dbReference type="InterPro" id="IPR000417">
    <property type="entry name" value="Hyethyz_kinase"/>
</dbReference>
<dbReference type="InterPro" id="IPR029056">
    <property type="entry name" value="Ribokinase-like"/>
</dbReference>
<dbReference type="NCBIfam" id="NF006830">
    <property type="entry name" value="PRK09355.1"/>
    <property type="match status" value="1"/>
</dbReference>
<dbReference type="NCBIfam" id="TIGR00694">
    <property type="entry name" value="thiM"/>
    <property type="match status" value="1"/>
</dbReference>
<dbReference type="Pfam" id="PF02110">
    <property type="entry name" value="HK"/>
    <property type="match status" value="1"/>
</dbReference>
<dbReference type="PIRSF" id="PIRSF000513">
    <property type="entry name" value="Thz_kinase"/>
    <property type="match status" value="1"/>
</dbReference>
<dbReference type="PRINTS" id="PR01099">
    <property type="entry name" value="HYETHTZKNASE"/>
</dbReference>
<dbReference type="SUPFAM" id="SSF53613">
    <property type="entry name" value="Ribokinase-like"/>
    <property type="match status" value="1"/>
</dbReference>
<feature type="chain" id="PRO_1000100419" description="Hydroxyethylthiazole kinase">
    <location>
        <begin position="1"/>
        <end position="265"/>
    </location>
</feature>
<feature type="binding site" evidence="1">
    <location>
        <position position="50"/>
    </location>
    <ligand>
        <name>substrate</name>
    </ligand>
</feature>
<feature type="binding site" evidence="1">
    <location>
        <position position="125"/>
    </location>
    <ligand>
        <name>ATP</name>
        <dbReference type="ChEBI" id="CHEBI:30616"/>
    </ligand>
</feature>
<feature type="binding site" evidence="1">
    <location>
        <position position="171"/>
    </location>
    <ligand>
        <name>ATP</name>
        <dbReference type="ChEBI" id="CHEBI:30616"/>
    </ligand>
</feature>
<feature type="binding site" evidence="1">
    <location>
        <position position="198"/>
    </location>
    <ligand>
        <name>substrate</name>
    </ligand>
</feature>
<organism>
    <name type="scientific">Salmonella dublin (strain CT_02021853)</name>
    <dbReference type="NCBI Taxonomy" id="439851"/>
    <lineage>
        <taxon>Bacteria</taxon>
        <taxon>Pseudomonadati</taxon>
        <taxon>Pseudomonadota</taxon>
        <taxon>Gammaproteobacteria</taxon>
        <taxon>Enterobacterales</taxon>
        <taxon>Enterobacteriaceae</taxon>
        <taxon>Salmonella</taxon>
    </lineage>
</organism>
<keyword id="KW-0067">ATP-binding</keyword>
<keyword id="KW-0418">Kinase</keyword>
<keyword id="KW-0460">Magnesium</keyword>
<keyword id="KW-0479">Metal-binding</keyword>
<keyword id="KW-0547">Nucleotide-binding</keyword>
<keyword id="KW-0784">Thiamine biosynthesis</keyword>
<keyword id="KW-0808">Transferase</keyword>
<comment type="function">
    <text evidence="1">Catalyzes the phosphorylation of the hydroxyl group of 4-methyl-5-beta-hydroxyethylthiazole (THZ).</text>
</comment>
<comment type="catalytic activity">
    <reaction evidence="1">
        <text>5-(2-hydroxyethyl)-4-methylthiazole + ATP = 4-methyl-5-(2-phosphooxyethyl)-thiazole + ADP + H(+)</text>
        <dbReference type="Rhea" id="RHEA:24212"/>
        <dbReference type="ChEBI" id="CHEBI:15378"/>
        <dbReference type="ChEBI" id="CHEBI:17957"/>
        <dbReference type="ChEBI" id="CHEBI:30616"/>
        <dbReference type="ChEBI" id="CHEBI:58296"/>
        <dbReference type="ChEBI" id="CHEBI:456216"/>
        <dbReference type="EC" id="2.7.1.50"/>
    </reaction>
</comment>
<comment type="cofactor">
    <cofactor evidence="1">
        <name>Mg(2+)</name>
        <dbReference type="ChEBI" id="CHEBI:18420"/>
    </cofactor>
</comment>
<comment type="pathway">
    <text evidence="1">Cofactor biosynthesis; thiamine diphosphate biosynthesis; 4-methyl-5-(2-phosphoethyl)-thiazole from 5-(2-hydroxyethyl)-4-methylthiazole: step 1/1.</text>
</comment>
<comment type="similarity">
    <text evidence="1">Belongs to the Thz kinase family.</text>
</comment>
<name>THIM_SALDC</name>
<sequence length="265" mass="27422">MQPDLHCRTLAAHTLKHFRALSPLTHCMTNDVVQTFTANTLLALGASPAMVIDPVEARPFAAIANALLINVGTLTASRADAMRAAVESAYDAKTPWTLDPVAVGALEFRRRFCLDLLSLRPAAIRGNASEILALSGMALGGRGVDTTEAALAALPAAQALARQIDCIVVVTGEIDYVTNGQRTLSIPGGDPLMTRIVGTGCALSAVVAASCALPGAALDNVASACCWMKLAGQAAAERSEGPGSFIPAFLDALYHLDVEAANATN</sequence>
<gene>
    <name evidence="1" type="primary">thiM</name>
    <name type="ordered locus">SeD_A2491</name>
</gene>
<reference key="1">
    <citation type="journal article" date="2011" name="J. Bacteriol.">
        <title>Comparative genomics of 28 Salmonella enterica isolates: evidence for CRISPR-mediated adaptive sublineage evolution.</title>
        <authorList>
            <person name="Fricke W.F."/>
            <person name="Mammel M.K."/>
            <person name="McDermott P.F."/>
            <person name="Tartera C."/>
            <person name="White D.G."/>
            <person name="Leclerc J.E."/>
            <person name="Ravel J."/>
            <person name="Cebula T.A."/>
        </authorList>
    </citation>
    <scope>NUCLEOTIDE SEQUENCE [LARGE SCALE GENOMIC DNA]</scope>
    <source>
        <strain>CT_02021853</strain>
    </source>
</reference>
<proteinExistence type="inferred from homology"/>
<protein>
    <recommendedName>
        <fullName evidence="1">Hydroxyethylthiazole kinase</fullName>
        <ecNumber evidence="1">2.7.1.50</ecNumber>
    </recommendedName>
    <alternativeName>
        <fullName evidence="1">4-methyl-5-beta-hydroxyethylthiazole kinase</fullName>
        <shortName evidence="1">TH kinase</shortName>
        <shortName evidence="1">Thz kinase</shortName>
    </alternativeName>
</protein>
<evidence type="ECO:0000255" key="1">
    <source>
        <dbReference type="HAMAP-Rule" id="MF_00228"/>
    </source>
</evidence>
<accession>B5FMW2</accession>